<protein>
    <recommendedName>
        <fullName>T-box transcription factor TBX5</fullName>
        <shortName>T-box protein 5</shortName>
    </recommendedName>
</protein>
<sequence>MADTEEAYGMPDTPVEAEPKELQCEPKQDNQMGASSKTPTSPQAAFTQQGMEGIKVFLHERELWLKFHEVGTEMIITKAGRRMFPSYKVKVTGLNPKTKYILLMDIVPADDHRYKFADNKWSVTGKAEPAMPGRLYVHPDSPATGTHWMRQLVSSQKLKLTNNHLDPFGHIILNSMHKYQPRLHIVKADENNGFGSKNTAFCTHVFSETAFIAATSYQNHKITQLKIENNPFAKGFRGSDDMELHRMSRMQSKEYPVVPRSTVRQKVSSNHSPFSQETRNITGSSTLNSQYQCENGVSSTSQDLLPPSSAYPSLPHESAPIYHCTKRKVSEEPAELSYKKPYMDTSPSEEDPYYRSGYPQPSSSSSSNNSFRTESAQRQACMYASSAPATEPVPSLEDISCNSWSSVPPYSSCTVGGGMQPMERLPYQHFSAHFTSSSLMPRLSNHGSTQPSDSHSMFQHQSTHQTIVRQCNPQPGLQQSSALQSTEFLYPHSVPRTISPHQYHSVHGVGMAPDWNENS</sequence>
<comment type="function">
    <text evidence="1">DNA-binding protein that regulates the transcription of several genes and is involved in heart development and limb pattern formation. May bind to the core DNA motif of promoters.</text>
</comment>
<comment type="subunit">
    <text evidence="1">Monomer. Homodimer (via the T-box); binds DNA as homodimer.</text>
</comment>
<comment type="subcellular location">
    <subcellularLocation>
        <location evidence="1 2">Nucleus</location>
    </subcellularLocation>
    <subcellularLocation>
        <location evidence="1">Cytoplasm</location>
    </subcellularLocation>
    <text evidence="1">Shuttles between the cytoplasm and the nucleus.</text>
</comment>
<comment type="developmental stage">
    <text evidence="4">In late neurulae (stage 19), expression seen within the eye anlagen, with higher levels dorsally. At early tail bud stage (stage 25), expressed in each developing eye and in the heart primordia, located ventrally. In stage 26 embryos, the Tbx5-expressing cells of the heart primordia are seen to converge at the ventral midline, while expression also seen in two bilateral groups of cells continuous with and extending dorsally from the heart primordia. Expression in the dorsal region of the eye found to be maintained until early tadpole stages (stage 40), although expression becomes greatly restricted between stages 33 and 40. At stage 31/32, strong expression detected in the posterior region of the heart tube. After looping of the heart, a higher level of expression detected in the ventricle than in the atrium.</text>
</comment>
<comment type="domain">
    <text evidence="1">The T-Box domain binds to double-stranded DNA.</text>
</comment>
<feature type="chain" id="PRO_0000262470" description="T-box transcription factor TBX5">
    <location>
        <begin position="1"/>
        <end position="519"/>
    </location>
</feature>
<feature type="DNA-binding region" description="T-box" evidence="1 2">
    <location>
        <begin position="63"/>
        <end position="238"/>
    </location>
</feature>
<feature type="region of interest" description="Disordered" evidence="3">
    <location>
        <begin position="1"/>
        <end position="43"/>
    </location>
</feature>
<feature type="region of interest" description="Disordered" evidence="3">
    <location>
        <begin position="254"/>
        <end position="312"/>
    </location>
</feature>
<feature type="region of interest" description="Disordered" evidence="3">
    <location>
        <begin position="335"/>
        <end position="376"/>
    </location>
</feature>
<feature type="compositionally biased region" description="Basic and acidic residues" evidence="3">
    <location>
        <begin position="17"/>
        <end position="28"/>
    </location>
</feature>
<feature type="compositionally biased region" description="Polar residues" evidence="3">
    <location>
        <begin position="29"/>
        <end position="43"/>
    </location>
</feature>
<feature type="compositionally biased region" description="Polar residues" evidence="3">
    <location>
        <begin position="262"/>
        <end position="303"/>
    </location>
</feature>
<accession>Q3SA47</accession>
<name>TBX5_XENTR</name>
<keyword id="KW-0963">Cytoplasm</keyword>
<keyword id="KW-0238">DNA-binding</keyword>
<keyword id="KW-0539">Nucleus</keyword>
<keyword id="KW-1185">Reference proteome</keyword>
<keyword id="KW-0804">Transcription</keyword>
<keyword id="KW-0805">Transcription regulation</keyword>
<dbReference type="EMBL" id="DQ124207">
    <property type="protein sequence ID" value="AAZ79652.1"/>
    <property type="molecule type" value="mRNA"/>
</dbReference>
<dbReference type="SMR" id="Q3SA47"/>
<dbReference type="FunCoup" id="Q3SA47">
    <property type="interactions" value="364"/>
</dbReference>
<dbReference type="STRING" id="8364.ENSXETP00000020827"/>
<dbReference type="PaxDb" id="8364-ENSXETP00000059243"/>
<dbReference type="eggNOG" id="KOG3585">
    <property type="taxonomic scope" value="Eukaryota"/>
</dbReference>
<dbReference type="InParanoid" id="Q3SA47"/>
<dbReference type="Proteomes" id="UP000008143">
    <property type="component" value="Unplaced"/>
</dbReference>
<dbReference type="GO" id="GO:0005737">
    <property type="term" value="C:cytoplasm"/>
    <property type="evidence" value="ECO:0000250"/>
    <property type="project" value="UniProtKB"/>
</dbReference>
<dbReference type="GO" id="GO:0005634">
    <property type="term" value="C:nucleus"/>
    <property type="evidence" value="ECO:0000250"/>
    <property type="project" value="UniProtKB"/>
</dbReference>
<dbReference type="GO" id="GO:0032991">
    <property type="term" value="C:protein-containing complex"/>
    <property type="evidence" value="ECO:0000250"/>
    <property type="project" value="UniProtKB"/>
</dbReference>
<dbReference type="GO" id="GO:0032993">
    <property type="term" value="C:protein-DNA complex"/>
    <property type="evidence" value="ECO:0000250"/>
    <property type="project" value="UniProtKB"/>
</dbReference>
<dbReference type="GO" id="GO:0003677">
    <property type="term" value="F:DNA binding"/>
    <property type="evidence" value="ECO:0000250"/>
    <property type="project" value="UniProtKB"/>
</dbReference>
<dbReference type="GO" id="GO:0003700">
    <property type="term" value="F:DNA-binding transcription factor activity"/>
    <property type="evidence" value="ECO:0000250"/>
    <property type="project" value="UniProtKB"/>
</dbReference>
<dbReference type="GO" id="GO:0000981">
    <property type="term" value="F:DNA-binding transcription factor activity, RNA polymerase II-specific"/>
    <property type="evidence" value="ECO:0000250"/>
    <property type="project" value="UniProtKB"/>
</dbReference>
<dbReference type="GO" id="GO:0000978">
    <property type="term" value="F:RNA polymerase II cis-regulatory region sequence-specific DNA binding"/>
    <property type="evidence" value="ECO:0000250"/>
    <property type="project" value="UniProtKB"/>
</dbReference>
<dbReference type="GO" id="GO:0043565">
    <property type="term" value="F:sequence-specific DNA binding"/>
    <property type="evidence" value="ECO:0000250"/>
    <property type="project" value="UniProtKB"/>
</dbReference>
<dbReference type="GO" id="GO:0048513">
    <property type="term" value="P:animal organ development"/>
    <property type="evidence" value="ECO:0000250"/>
    <property type="project" value="UniProtKB"/>
</dbReference>
<dbReference type="GO" id="GO:0007267">
    <property type="term" value="P:cell-cell signaling"/>
    <property type="evidence" value="ECO:0000250"/>
    <property type="project" value="UniProtKB"/>
</dbReference>
<dbReference type="GO" id="GO:0035115">
    <property type="term" value="P:embryonic forelimb morphogenesis"/>
    <property type="evidence" value="ECO:0000250"/>
    <property type="project" value="UniProtKB"/>
</dbReference>
<dbReference type="GO" id="GO:0030326">
    <property type="term" value="P:embryonic limb morphogenesis"/>
    <property type="evidence" value="ECO:0000250"/>
    <property type="project" value="UniProtKB"/>
</dbReference>
<dbReference type="GO" id="GO:0007507">
    <property type="term" value="P:heart development"/>
    <property type="evidence" value="ECO:0000250"/>
    <property type="project" value="UniProtKB"/>
</dbReference>
<dbReference type="GO" id="GO:0060044">
    <property type="term" value="P:negative regulation of cardiac muscle cell proliferation"/>
    <property type="evidence" value="ECO:0000250"/>
    <property type="project" value="UniProtKB"/>
</dbReference>
<dbReference type="GO" id="GO:0030336">
    <property type="term" value="P:negative regulation of cell migration"/>
    <property type="evidence" value="ECO:0000250"/>
    <property type="project" value="UniProtKB"/>
</dbReference>
<dbReference type="GO" id="GO:0008285">
    <property type="term" value="P:negative regulation of cell population proliferation"/>
    <property type="evidence" value="ECO:0000250"/>
    <property type="project" value="UniProtKB"/>
</dbReference>
<dbReference type="GO" id="GO:0060039">
    <property type="term" value="P:pericardium development"/>
    <property type="evidence" value="ECO:0000250"/>
    <property type="project" value="UniProtKB"/>
</dbReference>
<dbReference type="GO" id="GO:0051891">
    <property type="term" value="P:positive regulation of cardioblast differentiation"/>
    <property type="evidence" value="ECO:0000250"/>
    <property type="project" value="UniProtKB"/>
</dbReference>
<dbReference type="GO" id="GO:0045893">
    <property type="term" value="P:positive regulation of DNA-templated transcription"/>
    <property type="evidence" value="ECO:0000250"/>
    <property type="project" value="UniProtKB"/>
</dbReference>
<dbReference type="GO" id="GO:0045944">
    <property type="term" value="P:positive regulation of transcription by RNA polymerase II"/>
    <property type="evidence" value="ECO:0000250"/>
    <property type="project" value="UniProtKB"/>
</dbReference>
<dbReference type="CDD" id="cd20189">
    <property type="entry name" value="T-box_TBX4_5-like"/>
    <property type="match status" value="1"/>
</dbReference>
<dbReference type="FunFam" id="2.60.40.820:FF:000005">
    <property type="entry name" value="T-box transcription factor TBX5"/>
    <property type="match status" value="1"/>
</dbReference>
<dbReference type="Gene3D" id="2.60.40.820">
    <property type="entry name" value="Transcription factor, T-box"/>
    <property type="match status" value="1"/>
</dbReference>
<dbReference type="InterPro" id="IPR008967">
    <property type="entry name" value="p53-like_TF_DNA-bd_sf"/>
</dbReference>
<dbReference type="InterPro" id="IPR046360">
    <property type="entry name" value="T-box_DNA-bd"/>
</dbReference>
<dbReference type="InterPro" id="IPR036960">
    <property type="entry name" value="T-box_sf"/>
</dbReference>
<dbReference type="InterPro" id="IPR001699">
    <property type="entry name" value="TF_T-box"/>
</dbReference>
<dbReference type="InterPro" id="IPR018186">
    <property type="entry name" value="TF_T-box_CS"/>
</dbReference>
<dbReference type="PANTHER" id="PTHR11267">
    <property type="entry name" value="T-BOX PROTEIN-RELATED"/>
    <property type="match status" value="1"/>
</dbReference>
<dbReference type="PANTHER" id="PTHR11267:SF28">
    <property type="entry name" value="T-BOX TRANSCRIPTION FACTOR TBX5"/>
    <property type="match status" value="1"/>
</dbReference>
<dbReference type="Pfam" id="PF00907">
    <property type="entry name" value="T-box"/>
    <property type="match status" value="1"/>
</dbReference>
<dbReference type="PRINTS" id="PR00937">
    <property type="entry name" value="TBOX"/>
</dbReference>
<dbReference type="SMART" id="SM00425">
    <property type="entry name" value="TBOX"/>
    <property type="match status" value="1"/>
</dbReference>
<dbReference type="SUPFAM" id="SSF49417">
    <property type="entry name" value="p53-like transcription factors"/>
    <property type="match status" value="1"/>
</dbReference>
<dbReference type="PROSITE" id="PS01283">
    <property type="entry name" value="TBOX_1"/>
    <property type="match status" value="1"/>
</dbReference>
<dbReference type="PROSITE" id="PS50252">
    <property type="entry name" value="TBOX_3"/>
    <property type="match status" value="1"/>
</dbReference>
<organism>
    <name type="scientific">Xenopus tropicalis</name>
    <name type="common">Western clawed frog</name>
    <name type="synonym">Silurana tropicalis</name>
    <dbReference type="NCBI Taxonomy" id="8364"/>
    <lineage>
        <taxon>Eukaryota</taxon>
        <taxon>Metazoa</taxon>
        <taxon>Chordata</taxon>
        <taxon>Craniata</taxon>
        <taxon>Vertebrata</taxon>
        <taxon>Euteleostomi</taxon>
        <taxon>Amphibia</taxon>
        <taxon>Batrachia</taxon>
        <taxon>Anura</taxon>
        <taxon>Pipoidea</taxon>
        <taxon>Pipidae</taxon>
        <taxon>Xenopodinae</taxon>
        <taxon>Xenopus</taxon>
        <taxon>Silurana</taxon>
    </lineage>
</organism>
<proteinExistence type="evidence at transcript level"/>
<evidence type="ECO:0000250" key="1">
    <source>
        <dbReference type="UniProtKB" id="Q99593"/>
    </source>
</evidence>
<evidence type="ECO:0000255" key="2">
    <source>
        <dbReference type="PROSITE-ProRule" id="PRU00201"/>
    </source>
</evidence>
<evidence type="ECO:0000256" key="3">
    <source>
        <dbReference type="SAM" id="MobiDB-lite"/>
    </source>
</evidence>
<evidence type="ECO:0000269" key="4">
    <source>
    </source>
</evidence>
<gene>
    <name type="primary">tbx5</name>
</gene>
<reference key="1">
    <citation type="journal article" date="2006" name="Dev. Dyn.">
        <title>Developmental expression patterns of Tb x 1, Tb x 2, Tb x 5, and Tb x 20 in Xenopus tropicalis.</title>
        <authorList>
            <person name="Showell C."/>
            <person name="Christine K.S."/>
            <person name="Mandel E.M."/>
            <person name="Conlon F.L."/>
        </authorList>
    </citation>
    <scope>NUCLEOTIDE SEQUENCE [MRNA]</scope>
    <scope>DEVELOPMENTAL STAGE</scope>
</reference>